<dbReference type="PIR" id="S10616">
    <property type="entry name" value="HBGW"/>
</dbReference>
<dbReference type="SMR" id="P68229"/>
<dbReference type="GO" id="GO:0072562">
    <property type="term" value="C:blood microparticle"/>
    <property type="evidence" value="ECO:0007669"/>
    <property type="project" value="TreeGrafter"/>
</dbReference>
<dbReference type="GO" id="GO:0031838">
    <property type="term" value="C:haptoglobin-hemoglobin complex"/>
    <property type="evidence" value="ECO:0007669"/>
    <property type="project" value="TreeGrafter"/>
</dbReference>
<dbReference type="GO" id="GO:0005833">
    <property type="term" value="C:hemoglobin complex"/>
    <property type="evidence" value="ECO:0007669"/>
    <property type="project" value="InterPro"/>
</dbReference>
<dbReference type="GO" id="GO:0031720">
    <property type="term" value="F:haptoglobin binding"/>
    <property type="evidence" value="ECO:0007669"/>
    <property type="project" value="TreeGrafter"/>
</dbReference>
<dbReference type="GO" id="GO:0020037">
    <property type="term" value="F:heme binding"/>
    <property type="evidence" value="ECO:0007669"/>
    <property type="project" value="InterPro"/>
</dbReference>
<dbReference type="GO" id="GO:0031721">
    <property type="term" value="F:hemoglobin alpha binding"/>
    <property type="evidence" value="ECO:0007669"/>
    <property type="project" value="TreeGrafter"/>
</dbReference>
<dbReference type="GO" id="GO:0046872">
    <property type="term" value="F:metal ion binding"/>
    <property type="evidence" value="ECO:0007669"/>
    <property type="project" value="UniProtKB-KW"/>
</dbReference>
<dbReference type="GO" id="GO:0043177">
    <property type="term" value="F:organic acid binding"/>
    <property type="evidence" value="ECO:0007669"/>
    <property type="project" value="TreeGrafter"/>
</dbReference>
<dbReference type="GO" id="GO:0019825">
    <property type="term" value="F:oxygen binding"/>
    <property type="evidence" value="ECO:0007669"/>
    <property type="project" value="InterPro"/>
</dbReference>
<dbReference type="GO" id="GO:0005344">
    <property type="term" value="F:oxygen carrier activity"/>
    <property type="evidence" value="ECO:0007669"/>
    <property type="project" value="UniProtKB-KW"/>
</dbReference>
<dbReference type="GO" id="GO:0004601">
    <property type="term" value="F:peroxidase activity"/>
    <property type="evidence" value="ECO:0007669"/>
    <property type="project" value="TreeGrafter"/>
</dbReference>
<dbReference type="GO" id="GO:0042744">
    <property type="term" value="P:hydrogen peroxide catabolic process"/>
    <property type="evidence" value="ECO:0007669"/>
    <property type="project" value="TreeGrafter"/>
</dbReference>
<dbReference type="CDD" id="cd08925">
    <property type="entry name" value="Hb-beta-like"/>
    <property type="match status" value="1"/>
</dbReference>
<dbReference type="FunFam" id="1.10.490.10:FF:000001">
    <property type="entry name" value="Hemoglobin subunit beta"/>
    <property type="match status" value="1"/>
</dbReference>
<dbReference type="Gene3D" id="1.10.490.10">
    <property type="entry name" value="Globins"/>
    <property type="match status" value="1"/>
</dbReference>
<dbReference type="InterPro" id="IPR000971">
    <property type="entry name" value="Globin"/>
</dbReference>
<dbReference type="InterPro" id="IPR009050">
    <property type="entry name" value="Globin-like_sf"/>
</dbReference>
<dbReference type="InterPro" id="IPR012292">
    <property type="entry name" value="Globin/Proto"/>
</dbReference>
<dbReference type="InterPro" id="IPR002337">
    <property type="entry name" value="Hemoglobin_b"/>
</dbReference>
<dbReference type="InterPro" id="IPR050056">
    <property type="entry name" value="Hemoglobin_oxygen_transport"/>
</dbReference>
<dbReference type="PANTHER" id="PTHR11442">
    <property type="entry name" value="HEMOGLOBIN FAMILY MEMBER"/>
    <property type="match status" value="1"/>
</dbReference>
<dbReference type="PANTHER" id="PTHR11442:SF42">
    <property type="entry name" value="HEMOGLOBIN SUBUNIT BETA"/>
    <property type="match status" value="1"/>
</dbReference>
<dbReference type="Pfam" id="PF00042">
    <property type="entry name" value="Globin"/>
    <property type="match status" value="1"/>
</dbReference>
<dbReference type="PRINTS" id="PR00814">
    <property type="entry name" value="BETAHAEM"/>
</dbReference>
<dbReference type="SUPFAM" id="SSF46458">
    <property type="entry name" value="Globin-like"/>
    <property type="match status" value="1"/>
</dbReference>
<dbReference type="PROSITE" id="PS01033">
    <property type="entry name" value="GLOBIN"/>
    <property type="match status" value="1"/>
</dbReference>
<keyword id="KW-0007">Acetylation</keyword>
<keyword id="KW-0903">Direct protein sequencing</keyword>
<keyword id="KW-0349">Heme</keyword>
<keyword id="KW-0408">Iron</keyword>
<keyword id="KW-0479">Metal-binding</keyword>
<keyword id="KW-0561">Oxygen transport</keyword>
<keyword id="KW-0597">Phosphoprotein</keyword>
<keyword id="KW-0702">S-nitrosylation</keyword>
<keyword id="KW-0813">Transport</keyword>
<proteinExistence type="evidence at protein level"/>
<accession>P68229</accession>
<accession>P02068</accession>
<feature type="initiator methionine" description="Removed" evidence="1 2">
    <location>
        <position position="1"/>
    </location>
</feature>
<feature type="chain" id="PRO_0000052981" description="Hemoglobin subunit beta">
    <location>
        <begin position="2"/>
        <end position="147"/>
    </location>
</feature>
<feature type="domain" description="Globin" evidence="4">
    <location>
        <begin position="3"/>
        <end position="147"/>
    </location>
</feature>
<feature type="binding site" description="distal binding residue">
    <location>
        <position position="64"/>
    </location>
    <ligand>
        <name>heme b</name>
        <dbReference type="ChEBI" id="CHEBI:60344"/>
    </ligand>
    <ligandPart>
        <name>Fe</name>
        <dbReference type="ChEBI" id="CHEBI:18248"/>
    </ligandPart>
</feature>
<feature type="binding site" description="proximal binding residue">
    <location>
        <position position="93"/>
    </location>
    <ligand>
        <name>heme b</name>
        <dbReference type="ChEBI" id="CHEBI:60344"/>
    </ligand>
    <ligandPart>
        <name>Fe</name>
        <dbReference type="ChEBI" id="CHEBI:18248"/>
    </ligandPart>
</feature>
<feature type="modified residue" description="N-acetylvaline" evidence="1">
    <location>
        <position position="2"/>
    </location>
</feature>
<feature type="modified residue" description="Phosphoserine" evidence="3">
    <location>
        <position position="45"/>
    </location>
</feature>
<feature type="modified residue" description="N6-acetyllysine" evidence="3">
    <location>
        <position position="60"/>
    </location>
</feature>
<feature type="modified residue" description="N6-acetyllysine" evidence="3">
    <location>
        <position position="83"/>
    </location>
</feature>
<feature type="modified residue" description="S-nitrosocysteine" evidence="3">
    <location>
        <position position="94"/>
    </location>
</feature>
<feature type="sequence variant" evidence="5">
    <original>A</original>
    <variation>S</variation>
    <location>
        <position position="136"/>
    </location>
</feature>
<name>HBB_LAMGU</name>
<organism>
    <name type="scientific">Lama guanicoe</name>
    <name type="common">Guanaco</name>
    <name type="synonym">Lama glama guanicoe</name>
    <dbReference type="NCBI Taxonomy" id="9840"/>
    <lineage>
        <taxon>Eukaryota</taxon>
        <taxon>Metazoa</taxon>
        <taxon>Chordata</taxon>
        <taxon>Craniata</taxon>
        <taxon>Vertebrata</taxon>
        <taxon>Euteleostomi</taxon>
        <taxon>Mammalia</taxon>
        <taxon>Eutheria</taxon>
        <taxon>Laurasiatheria</taxon>
        <taxon>Artiodactyla</taxon>
        <taxon>Tylopoda</taxon>
        <taxon>Camelidae</taxon>
        <taxon>Lama</taxon>
    </lineage>
</organism>
<gene>
    <name type="primary">HBB</name>
</gene>
<reference key="1">
    <citation type="journal article" date="1990" name="Biol. Chem. Hoppe-Seyler">
        <title>Primary structure and oxygen-binding properties of the hemoglobin from guanaco (Lama guanacoe, Tylopoda).</title>
        <authorList>
            <person name="Piccinini M."/>
            <person name="Kleinschmidt T."/>
            <person name="Jurgens K.D."/>
            <person name="Braunitzer G."/>
        </authorList>
    </citation>
    <scope>PROTEIN SEQUENCE OF 2-147</scope>
    <scope>VARIANT SER-136</scope>
</reference>
<evidence type="ECO:0000250" key="1">
    <source>
        <dbReference type="UniProtKB" id="P02086"/>
    </source>
</evidence>
<evidence type="ECO:0000250" key="2">
    <source>
        <dbReference type="UniProtKB" id="P18983"/>
    </source>
</evidence>
<evidence type="ECO:0000250" key="3">
    <source>
        <dbReference type="UniProtKB" id="P68871"/>
    </source>
</evidence>
<evidence type="ECO:0000255" key="4">
    <source>
        <dbReference type="PROSITE-ProRule" id="PRU00238"/>
    </source>
</evidence>
<evidence type="ECO:0000269" key="5">
    <source>
    </source>
</evidence>
<protein>
    <recommendedName>
        <fullName>Hemoglobin subunit beta</fullName>
    </recommendedName>
    <alternativeName>
        <fullName>Beta-globin</fullName>
    </alternativeName>
    <alternativeName>
        <fullName>Hemoglobin beta chain</fullName>
    </alternativeName>
</protein>
<sequence>MVNLSGDEKNAVHGLWSKVKVDEVGGEALGRLLVVYPWTRRFFESFGDLSTADAVMNNPKVKAHGSKVLNSFGDGLSHLDNLKGTYAKLSELHCDKLHVDPENFRLLGNVLVVVLARHFGKEFTPDLQAAYQKVVAGVANALAHRYH</sequence>
<comment type="function">
    <text>Involved in oxygen transport from the lung to the various peripheral tissues.</text>
</comment>
<comment type="subunit">
    <text>Heterotetramer of two alpha chains and two beta chains.</text>
</comment>
<comment type="tissue specificity">
    <text>Red blood cells.</text>
</comment>
<comment type="similarity">
    <text evidence="4">Belongs to the globin family.</text>
</comment>